<accession>Q892J3</accession>
<proteinExistence type="inferred from homology"/>
<name>AROC_CLOTE</name>
<sequence length="386" mass="43805">MERYTMLRFLDAGESHGKAMMSIIDGIPSNFKVDIDFINNELKRRQKCYGRGGRMKIEKDKIQFLSGLRGTMTTGNPITMAIYNNDSPNWEKILSGEVKKDEKITIPRPGHGDLVGYFKYGTGDIRDSIERTSARETSIRTAVGALCKQILKGIGIEVRSKVYSIGNLFDEKVDLFDQCKYKKIDNSLLRCYNEEVEKSFVKKIDICREQGETIGGTVFLSVRGVPIGLGSYSQWDRKLDALLSYAIMSLQGVKAIEFGNGMNLNLRGSTFNDEILYEKGKFKRPTNNCGGIESGVSNGENIEMKVYIKPIPSIKKNIRTVNLRNRKETTTRYERSDVSAVVPASIVLENIVAFEILKEILNKFPSDEYYELKRNISHYRGTIYLR</sequence>
<comment type="function">
    <text evidence="1">Catalyzes the anti-1,4-elimination of the C-3 phosphate and the C-6 proR hydrogen from 5-enolpyruvylshikimate-3-phosphate (EPSP) to yield chorismate, which is the branch point compound that serves as the starting substrate for the three terminal pathways of aromatic amino acid biosynthesis. This reaction introduces a second double bond into the aromatic ring system.</text>
</comment>
<comment type="catalytic activity">
    <reaction evidence="1">
        <text>5-O-(1-carboxyvinyl)-3-phosphoshikimate = chorismate + phosphate</text>
        <dbReference type="Rhea" id="RHEA:21020"/>
        <dbReference type="ChEBI" id="CHEBI:29748"/>
        <dbReference type="ChEBI" id="CHEBI:43474"/>
        <dbReference type="ChEBI" id="CHEBI:57701"/>
        <dbReference type="EC" id="4.2.3.5"/>
    </reaction>
</comment>
<comment type="cofactor">
    <cofactor evidence="1">
        <name>FMNH2</name>
        <dbReference type="ChEBI" id="CHEBI:57618"/>
    </cofactor>
    <text evidence="1">Reduced FMN (FMNH(2)).</text>
</comment>
<comment type="pathway">
    <text evidence="1">Metabolic intermediate biosynthesis; chorismate biosynthesis; chorismate from D-erythrose 4-phosphate and phosphoenolpyruvate: step 7/7.</text>
</comment>
<comment type="subunit">
    <text evidence="1">Homotetramer.</text>
</comment>
<comment type="similarity">
    <text evidence="1">Belongs to the chorismate synthase family.</text>
</comment>
<protein>
    <recommendedName>
        <fullName evidence="1">Chorismate synthase</fullName>
        <shortName evidence="1">CS</shortName>
        <ecNumber evidence="1">4.2.3.5</ecNumber>
    </recommendedName>
    <alternativeName>
        <fullName evidence="1">5-enolpyruvylshikimate-3-phosphate phospholyase</fullName>
    </alternativeName>
</protein>
<feature type="chain" id="PRO_0000405969" description="Chorismate synthase">
    <location>
        <begin position="1"/>
        <end position="386"/>
    </location>
</feature>
<feature type="binding site" evidence="1">
    <location>
        <position position="45"/>
    </location>
    <ligand>
        <name>NADP(+)</name>
        <dbReference type="ChEBI" id="CHEBI:58349"/>
    </ligand>
</feature>
<feature type="binding site" evidence="1">
    <location>
        <position position="51"/>
    </location>
    <ligand>
        <name>NADP(+)</name>
        <dbReference type="ChEBI" id="CHEBI:58349"/>
    </ligand>
</feature>
<feature type="binding site" evidence="1">
    <location>
        <begin position="131"/>
        <end position="133"/>
    </location>
    <ligand>
        <name>FMN</name>
        <dbReference type="ChEBI" id="CHEBI:58210"/>
    </ligand>
</feature>
<feature type="binding site" evidence="1">
    <location>
        <begin position="251"/>
        <end position="252"/>
    </location>
    <ligand>
        <name>FMN</name>
        <dbReference type="ChEBI" id="CHEBI:58210"/>
    </ligand>
</feature>
<feature type="binding site" evidence="1">
    <location>
        <position position="294"/>
    </location>
    <ligand>
        <name>FMN</name>
        <dbReference type="ChEBI" id="CHEBI:58210"/>
    </ligand>
</feature>
<feature type="binding site" evidence="1">
    <location>
        <begin position="309"/>
        <end position="313"/>
    </location>
    <ligand>
        <name>FMN</name>
        <dbReference type="ChEBI" id="CHEBI:58210"/>
    </ligand>
</feature>
<feature type="binding site" evidence="1">
    <location>
        <position position="335"/>
    </location>
    <ligand>
        <name>FMN</name>
        <dbReference type="ChEBI" id="CHEBI:58210"/>
    </ligand>
</feature>
<dbReference type="EC" id="4.2.3.5" evidence="1"/>
<dbReference type="EMBL" id="AE015927">
    <property type="protein sequence ID" value="AAO36602.1"/>
    <property type="molecule type" value="Genomic_DNA"/>
</dbReference>
<dbReference type="SMR" id="Q892J3"/>
<dbReference type="STRING" id="212717.CTC_02104"/>
<dbReference type="KEGG" id="ctc:CTC_02104"/>
<dbReference type="HOGENOM" id="CLU_034547_2_0_9"/>
<dbReference type="UniPathway" id="UPA00053">
    <property type="reaction ID" value="UER00090"/>
</dbReference>
<dbReference type="Proteomes" id="UP000001412">
    <property type="component" value="Chromosome"/>
</dbReference>
<dbReference type="GO" id="GO:0005829">
    <property type="term" value="C:cytosol"/>
    <property type="evidence" value="ECO:0007669"/>
    <property type="project" value="TreeGrafter"/>
</dbReference>
<dbReference type="GO" id="GO:0004107">
    <property type="term" value="F:chorismate synthase activity"/>
    <property type="evidence" value="ECO:0007669"/>
    <property type="project" value="UniProtKB-UniRule"/>
</dbReference>
<dbReference type="GO" id="GO:0010181">
    <property type="term" value="F:FMN binding"/>
    <property type="evidence" value="ECO:0007669"/>
    <property type="project" value="TreeGrafter"/>
</dbReference>
<dbReference type="GO" id="GO:0008652">
    <property type="term" value="P:amino acid biosynthetic process"/>
    <property type="evidence" value="ECO:0007669"/>
    <property type="project" value="UniProtKB-KW"/>
</dbReference>
<dbReference type="GO" id="GO:0009073">
    <property type="term" value="P:aromatic amino acid family biosynthetic process"/>
    <property type="evidence" value="ECO:0007669"/>
    <property type="project" value="UniProtKB-KW"/>
</dbReference>
<dbReference type="GO" id="GO:0009423">
    <property type="term" value="P:chorismate biosynthetic process"/>
    <property type="evidence" value="ECO:0007669"/>
    <property type="project" value="UniProtKB-UniRule"/>
</dbReference>
<dbReference type="CDD" id="cd07304">
    <property type="entry name" value="Chorismate_synthase"/>
    <property type="match status" value="1"/>
</dbReference>
<dbReference type="FunFam" id="3.60.150.10:FF:000002">
    <property type="entry name" value="Chorismate synthase"/>
    <property type="match status" value="1"/>
</dbReference>
<dbReference type="Gene3D" id="3.60.150.10">
    <property type="entry name" value="Chorismate synthase AroC"/>
    <property type="match status" value="1"/>
</dbReference>
<dbReference type="HAMAP" id="MF_00300">
    <property type="entry name" value="Chorismate_synth"/>
    <property type="match status" value="1"/>
</dbReference>
<dbReference type="InterPro" id="IPR000453">
    <property type="entry name" value="Chorismate_synth"/>
</dbReference>
<dbReference type="InterPro" id="IPR035904">
    <property type="entry name" value="Chorismate_synth_AroC_sf"/>
</dbReference>
<dbReference type="InterPro" id="IPR020541">
    <property type="entry name" value="Chorismate_synthase_CS"/>
</dbReference>
<dbReference type="NCBIfam" id="TIGR00033">
    <property type="entry name" value="aroC"/>
    <property type="match status" value="1"/>
</dbReference>
<dbReference type="NCBIfam" id="NF003793">
    <property type="entry name" value="PRK05382.1"/>
    <property type="match status" value="1"/>
</dbReference>
<dbReference type="PANTHER" id="PTHR21085">
    <property type="entry name" value="CHORISMATE SYNTHASE"/>
    <property type="match status" value="1"/>
</dbReference>
<dbReference type="PANTHER" id="PTHR21085:SF0">
    <property type="entry name" value="CHORISMATE SYNTHASE"/>
    <property type="match status" value="1"/>
</dbReference>
<dbReference type="Pfam" id="PF01264">
    <property type="entry name" value="Chorismate_synt"/>
    <property type="match status" value="1"/>
</dbReference>
<dbReference type="PIRSF" id="PIRSF001456">
    <property type="entry name" value="Chorismate_synth"/>
    <property type="match status" value="1"/>
</dbReference>
<dbReference type="SUPFAM" id="SSF103263">
    <property type="entry name" value="Chorismate synthase, AroC"/>
    <property type="match status" value="1"/>
</dbReference>
<dbReference type="PROSITE" id="PS00787">
    <property type="entry name" value="CHORISMATE_SYNTHASE_1"/>
    <property type="match status" value="1"/>
</dbReference>
<dbReference type="PROSITE" id="PS00788">
    <property type="entry name" value="CHORISMATE_SYNTHASE_2"/>
    <property type="match status" value="1"/>
</dbReference>
<dbReference type="PROSITE" id="PS00789">
    <property type="entry name" value="CHORISMATE_SYNTHASE_3"/>
    <property type="match status" value="1"/>
</dbReference>
<keyword id="KW-0028">Amino-acid biosynthesis</keyword>
<keyword id="KW-0057">Aromatic amino acid biosynthesis</keyword>
<keyword id="KW-0274">FAD</keyword>
<keyword id="KW-0285">Flavoprotein</keyword>
<keyword id="KW-0288">FMN</keyword>
<keyword id="KW-0456">Lyase</keyword>
<keyword id="KW-0521">NADP</keyword>
<keyword id="KW-1185">Reference proteome</keyword>
<reference key="1">
    <citation type="journal article" date="2003" name="Proc. Natl. Acad. Sci. U.S.A.">
        <title>The genome sequence of Clostridium tetani, the causative agent of tetanus disease.</title>
        <authorList>
            <person name="Brueggemann H."/>
            <person name="Baeumer S."/>
            <person name="Fricke W.F."/>
            <person name="Wiezer A."/>
            <person name="Liesegang H."/>
            <person name="Decker I."/>
            <person name="Herzberg C."/>
            <person name="Martinez-Arias R."/>
            <person name="Merkl R."/>
            <person name="Henne A."/>
            <person name="Gottschalk G."/>
        </authorList>
    </citation>
    <scope>NUCLEOTIDE SEQUENCE [LARGE SCALE GENOMIC DNA]</scope>
    <source>
        <strain>Massachusetts / E88</strain>
    </source>
</reference>
<organism>
    <name type="scientific">Clostridium tetani (strain Massachusetts / E88)</name>
    <dbReference type="NCBI Taxonomy" id="212717"/>
    <lineage>
        <taxon>Bacteria</taxon>
        <taxon>Bacillati</taxon>
        <taxon>Bacillota</taxon>
        <taxon>Clostridia</taxon>
        <taxon>Eubacteriales</taxon>
        <taxon>Clostridiaceae</taxon>
        <taxon>Clostridium</taxon>
    </lineage>
</organism>
<evidence type="ECO:0000255" key="1">
    <source>
        <dbReference type="HAMAP-Rule" id="MF_00300"/>
    </source>
</evidence>
<gene>
    <name evidence="1" type="primary">aroC</name>
    <name type="ordered locus">CTC_02104</name>
</gene>